<proteinExistence type="inferred from homology"/>
<feature type="chain" id="PRO_0000400219" description="1D-myo-inositol 2-acetamido-2-deoxy-alpha-D-glucopyranoside deacetylase 2">
    <location>
        <begin position="1"/>
        <end position="274"/>
    </location>
</feature>
<feature type="binding site" evidence="1">
    <location>
        <position position="6"/>
    </location>
    <ligand>
        <name>Zn(2+)</name>
        <dbReference type="ChEBI" id="CHEBI:29105"/>
    </ligand>
</feature>
<feature type="binding site" evidence="1">
    <location>
        <position position="9"/>
    </location>
    <ligand>
        <name>Zn(2+)</name>
        <dbReference type="ChEBI" id="CHEBI:29105"/>
    </ligand>
</feature>
<feature type="binding site" evidence="1">
    <location>
        <position position="140"/>
    </location>
    <ligand>
        <name>Zn(2+)</name>
        <dbReference type="ChEBI" id="CHEBI:29105"/>
    </ligand>
</feature>
<accession>A4F9Z0</accession>
<gene>
    <name evidence="1" type="primary">mshB2</name>
    <name type="ordered locus">SACE_1543</name>
</gene>
<comment type="function">
    <text evidence="1">Catalyzes the deacetylation of 1D-myo-inositol 2-acetamido-2-deoxy-alpha-D-glucopyranoside (GlcNAc-Ins) in the mycothiol biosynthesis pathway.</text>
</comment>
<comment type="catalytic activity">
    <reaction evidence="1">
        <text>1D-myo-inositol 2-acetamido-2-deoxy-alpha-D-glucopyranoside + H2O = 1D-myo-inositol 2-amino-2-deoxy-alpha-D-glucopyranoside + acetate</text>
        <dbReference type="Rhea" id="RHEA:26180"/>
        <dbReference type="ChEBI" id="CHEBI:15377"/>
        <dbReference type="ChEBI" id="CHEBI:30089"/>
        <dbReference type="ChEBI" id="CHEBI:52442"/>
        <dbReference type="ChEBI" id="CHEBI:58886"/>
        <dbReference type="EC" id="3.5.1.103"/>
    </reaction>
</comment>
<comment type="cofactor">
    <cofactor evidence="1">
        <name>Zn(2+)</name>
        <dbReference type="ChEBI" id="CHEBI:29105"/>
    </cofactor>
    <text evidence="1">Binds 1 zinc ion per subunit.</text>
</comment>
<comment type="similarity">
    <text evidence="1">Belongs to the MshB deacetylase family.</text>
</comment>
<evidence type="ECO:0000255" key="1">
    <source>
        <dbReference type="HAMAP-Rule" id="MF_01696"/>
    </source>
</evidence>
<dbReference type="EC" id="3.5.1.103" evidence="1"/>
<dbReference type="EMBL" id="AM420293">
    <property type="protein sequence ID" value="CAM00865.1"/>
    <property type="molecule type" value="Genomic_DNA"/>
</dbReference>
<dbReference type="RefSeq" id="WP_009948198.1">
    <property type="nucleotide sequence ID" value="NC_009142.1"/>
</dbReference>
<dbReference type="SMR" id="A4F9Z0"/>
<dbReference type="STRING" id="405948.SACE_1543"/>
<dbReference type="KEGG" id="sen:SACE_1543"/>
<dbReference type="eggNOG" id="COG2120">
    <property type="taxonomic scope" value="Bacteria"/>
</dbReference>
<dbReference type="HOGENOM" id="CLU_049311_2_1_11"/>
<dbReference type="OrthoDB" id="158614at2"/>
<dbReference type="Proteomes" id="UP000006728">
    <property type="component" value="Chromosome"/>
</dbReference>
<dbReference type="GO" id="GO:0035595">
    <property type="term" value="F:N-acetylglucosaminylinositol deacetylase activity"/>
    <property type="evidence" value="ECO:0007669"/>
    <property type="project" value="UniProtKB-EC"/>
</dbReference>
<dbReference type="GO" id="GO:0008270">
    <property type="term" value="F:zinc ion binding"/>
    <property type="evidence" value="ECO:0007669"/>
    <property type="project" value="UniProtKB-UniRule"/>
</dbReference>
<dbReference type="GO" id="GO:0010125">
    <property type="term" value="P:mycothiol biosynthetic process"/>
    <property type="evidence" value="ECO:0007669"/>
    <property type="project" value="UniProtKB-UniRule"/>
</dbReference>
<dbReference type="Gene3D" id="3.40.50.10320">
    <property type="entry name" value="LmbE-like"/>
    <property type="match status" value="1"/>
</dbReference>
<dbReference type="HAMAP" id="MF_01696">
    <property type="entry name" value="MshB"/>
    <property type="match status" value="1"/>
</dbReference>
<dbReference type="InterPro" id="IPR003737">
    <property type="entry name" value="GlcNAc_PI_deacetylase-related"/>
</dbReference>
<dbReference type="InterPro" id="IPR024078">
    <property type="entry name" value="LmbE-like_dom_sf"/>
</dbReference>
<dbReference type="InterPro" id="IPR017810">
    <property type="entry name" value="Mycothiol_biosynthesis_MshB"/>
</dbReference>
<dbReference type="NCBIfam" id="TIGR03445">
    <property type="entry name" value="mycothiol_MshB"/>
    <property type="match status" value="1"/>
</dbReference>
<dbReference type="PANTHER" id="PTHR12993:SF26">
    <property type="entry name" value="1D-MYO-INOSITOL 2-ACETAMIDO-2-DEOXY-ALPHA-D-GLUCOPYRANOSIDE DEACETYLASE"/>
    <property type="match status" value="1"/>
</dbReference>
<dbReference type="PANTHER" id="PTHR12993">
    <property type="entry name" value="N-ACETYLGLUCOSAMINYL-PHOSPHATIDYLINOSITOL DE-N-ACETYLASE-RELATED"/>
    <property type="match status" value="1"/>
</dbReference>
<dbReference type="Pfam" id="PF02585">
    <property type="entry name" value="PIG-L"/>
    <property type="match status" value="1"/>
</dbReference>
<dbReference type="SUPFAM" id="SSF102588">
    <property type="entry name" value="LmbE-like"/>
    <property type="match status" value="1"/>
</dbReference>
<reference key="1">
    <citation type="journal article" date="2007" name="Nat. Biotechnol.">
        <title>Complete genome sequence of the erythromycin-producing bacterium Saccharopolyspora erythraea NRRL23338.</title>
        <authorList>
            <person name="Oliynyk M."/>
            <person name="Samborskyy M."/>
            <person name="Lester J.B."/>
            <person name="Mironenko T."/>
            <person name="Scott N."/>
            <person name="Dickens S."/>
            <person name="Haydock S.F."/>
            <person name="Leadlay P.F."/>
        </authorList>
    </citation>
    <scope>NUCLEOTIDE SEQUENCE [LARGE SCALE GENOMIC DNA]</scope>
    <source>
        <strain>ATCC 11635 / DSM 40517 / JCM 4748 / NBRC 13426 / NCIMB 8594 / NRRL 2338</strain>
    </source>
</reference>
<keyword id="KW-0378">Hydrolase</keyword>
<keyword id="KW-0479">Metal-binding</keyword>
<keyword id="KW-1185">Reference proteome</keyword>
<keyword id="KW-0862">Zinc</keyword>
<protein>
    <recommendedName>
        <fullName evidence="1">1D-myo-inositol 2-acetamido-2-deoxy-alpha-D-glucopyranoside deacetylase 2</fullName>
        <shortName evidence="1">GlcNAc-Ins deacetylase 2</shortName>
        <ecNumber evidence="1">3.5.1.103</ecNumber>
    </recommendedName>
    <alternativeName>
        <fullName>N-acetyl-1-D-myo-inositol 2-amino-2-deoxy-alpha-D-glucopyranoside deacetylase 2</fullName>
    </alternativeName>
</protein>
<organism>
    <name type="scientific">Saccharopolyspora erythraea (strain ATCC 11635 / DSM 40517 / JCM 4748 / NBRC 13426 / NCIMB 8594 / NRRL 2338)</name>
    <dbReference type="NCBI Taxonomy" id="405948"/>
    <lineage>
        <taxon>Bacteria</taxon>
        <taxon>Bacillati</taxon>
        <taxon>Actinomycetota</taxon>
        <taxon>Actinomycetes</taxon>
        <taxon>Pseudonocardiales</taxon>
        <taxon>Pseudonocardiaceae</taxon>
        <taxon>Saccharopolyspora</taxon>
    </lineage>
</organism>
<sequence length="274" mass="29876">MLVHAHPDDESTGTGATMARYANEGATVSLVTCTSGELGEVVADDLAHLRGNPDALGEHRRGEIAEALRELGDIRHHWLGGPGRFRDSGMAGEDTNDAAECFAKADRDDVTRAMVEILRAERPHVVVTYDDTGGYGHPDHIAANHALMYALGPAADPAYLPELGEPWDVPKVYWMTLPRSFVKDVQAAGIEGFEPFTVPDEDITAVLDGRDHHAKKLAALRTYRSQVSLDDGDFFATLVQDPRFAIEHYVLVRGERGPGSGPHNWENDLFAGLD</sequence>
<name>MSHB2_SACEN</name>